<keyword id="KW-0342">GTP-binding</keyword>
<keyword id="KW-0460">Magnesium</keyword>
<keyword id="KW-0479">Metal-binding</keyword>
<keyword id="KW-0547">Nucleotide-binding</keyword>
<keyword id="KW-1185">Reference proteome</keyword>
<keyword id="KW-0807">Transducer</keyword>
<reference key="1">
    <citation type="journal article" date="1997" name="EMBO J.">
        <title>G proteins in Ustilago maydis: transmission of multiple signals?</title>
        <authorList>
            <person name="Regenfelder E."/>
            <person name="Spellig T."/>
            <person name="Hartmann A."/>
            <person name="Lauenstein S."/>
            <person name="Boelker M."/>
            <person name="Kahmann R."/>
        </authorList>
    </citation>
    <scope>NUCLEOTIDE SEQUENCE [GENOMIC DNA]</scope>
    <source>
        <strain>FB1</strain>
    </source>
</reference>
<reference key="2">
    <citation type="journal article" date="2006" name="Nature">
        <title>Insights from the genome of the biotrophic fungal plant pathogen Ustilago maydis.</title>
        <authorList>
            <person name="Kaemper J."/>
            <person name="Kahmann R."/>
            <person name="Boelker M."/>
            <person name="Ma L.-J."/>
            <person name="Brefort T."/>
            <person name="Saville B.J."/>
            <person name="Banuett F."/>
            <person name="Kronstad J.W."/>
            <person name="Gold S.E."/>
            <person name="Mueller O."/>
            <person name="Perlin M.H."/>
            <person name="Woesten H.A.B."/>
            <person name="de Vries R."/>
            <person name="Ruiz-Herrera J."/>
            <person name="Reynaga-Pena C.G."/>
            <person name="Snetselaar K."/>
            <person name="McCann M."/>
            <person name="Perez-Martin J."/>
            <person name="Feldbruegge M."/>
            <person name="Basse C.W."/>
            <person name="Steinberg G."/>
            <person name="Ibeas J.I."/>
            <person name="Holloman W."/>
            <person name="Guzman P."/>
            <person name="Farman M.L."/>
            <person name="Stajich J.E."/>
            <person name="Sentandreu R."/>
            <person name="Gonzalez-Prieto J.M."/>
            <person name="Kennell J.C."/>
            <person name="Molina L."/>
            <person name="Schirawski J."/>
            <person name="Mendoza-Mendoza A."/>
            <person name="Greilinger D."/>
            <person name="Muench K."/>
            <person name="Roessel N."/>
            <person name="Scherer M."/>
            <person name="Vranes M."/>
            <person name="Ladendorf O."/>
            <person name="Vincon V."/>
            <person name="Fuchs U."/>
            <person name="Sandrock B."/>
            <person name="Meng S."/>
            <person name="Ho E.C.H."/>
            <person name="Cahill M.J."/>
            <person name="Boyce K.J."/>
            <person name="Klose J."/>
            <person name="Klosterman S.J."/>
            <person name="Deelstra H.J."/>
            <person name="Ortiz-Castellanos L."/>
            <person name="Li W."/>
            <person name="Sanchez-Alonso P."/>
            <person name="Schreier P.H."/>
            <person name="Haeuser-Hahn I."/>
            <person name="Vaupel M."/>
            <person name="Koopmann E."/>
            <person name="Friedrich G."/>
            <person name="Voss H."/>
            <person name="Schlueter T."/>
            <person name="Margolis J."/>
            <person name="Platt D."/>
            <person name="Swimmer C."/>
            <person name="Gnirke A."/>
            <person name="Chen F."/>
            <person name="Vysotskaia V."/>
            <person name="Mannhaupt G."/>
            <person name="Gueldener U."/>
            <person name="Muensterkoetter M."/>
            <person name="Haase D."/>
            <person name="Oesterheld M."/>
            <person name="Mewes H.-W."/>
            <person name="Mauceli E.W."/>
            <person name="DeCaprio D."/>
            <person name="Wade C.M."/>
            <person name="Butler J."/>
            <person name="Young S.K."/>
            <person name="Jaffe D.B."/>
            <person name="Calvo S.E."/>
            <person name="Nusbaum C."/>
            <person name="Galagan J.E."/>
            <person name="Birren B.W."/>
        </authorList>
    </citation>
    <scope>NUCLEOTIDE SEQUENCE [LARGE SCALE GENOMIC DNA]</scope>
    <source>
        <strain>DSM 14603 / FGSC 9021 / UM521</strain>
    </source>
</reference>
<reference key="3">
    <citation type="submission" date="2014-09" db="EMBL/GenBank/DDBJ databases">
        <authorList>
            <person name="Gueldener U."/>
            <person name="Muensterkoetter M."/>
            <person name="Walter M.C."/>
            <person name="Mannhaupt G."/>
            <person name="Kahmann R."/>
        </authorList>
    </citation>
    <scope>GENOME REANNOTATION</scope>
    <source>
        <strain>DSM 14603 / FGSC 9021 / UM521</strain>
    </source>
</reference>
<sequence length="580" mass="65199">MSPSVSSPQLRHTKSNRAISRIDRTDPLALALQPPANEAPADKYARLHQEKLAKQRSDEIDKFLKQHQEDRATHGLASSPSTSVDGANFKKGRVYKMVLLGQAGAGKTTVLKQMRLLYDPPAHERERRGWTKIVLLNLTSSVRVLLETLSLYHDQRLERKSSELSRLESSTSASTSTSASASSPKHVDTESQPNDATRLELAKQLGTTKKINTSSLPWLTHIPSVVQLERALRTELGAFGEEAVLSASSDEAAITNQKVRTRLDAQGSSSIRGEKSPLVLRPGWQERLFTYARRSLSLTQNGRAAAARRETDGGDSQSESEKDNSETLKLLRAIRPEVLALWNDDAGCRALRKRGLFLDGQSDAATSYFLDNYSRITDAAYRPTDEDILHSRVRTLGVTEDVFRVDRSLIYRIYDVGGSRSQRAAWAPFLDDIESIIFLAPLSAFDQPLVEDCSTNRLADTFTLFNQIVTNPLLEHATMILFLNKIDLLEKKLRQGVQLHKYWPEYVGDNDFEAVWRWFRAKFRDALRRAEDEVNLDQTSRRRLYVHTTVATSTVQIRAILMSVKDSILRENLKLTGLVG</sequence>
<organism>
    <name type="scientific">Mycosarcoma maydis</name>
    <name type="common">Corn smut fungus</name>
    <name type="synonym">Ustilago maydis</name>
    <dbReference type="NCBI Taxonomy" id="5270"/>
    <lineage>
        <taxon>Eukaryota</taxon>
        <taxon>Fungi</taxon>
        <taxon>Dikarya</taxon>
        <taxon>Basidiomycota</taxon>
        <taxon>Ustilaginomycotina</taxon>
        <taxon>Ustilaginomycetes</taxon>
        <taxon>Ustilaginales</taxon>
        <taxon>Ustilaginaceae</taxon>
        <taxon>Mycosarcoma</taxon>
    </lineage>
</organism>
<proteinExistence type="inferred from homology"/>
<comment type="function">
    <text>Guanine nucleotide-binding proteins (G proteins) are involved as modulators or transducers in various transmembrane signaling systems.</text>
</comment>
<comment type="subunit">
    <text>G proteins are composed of 3 units; alpha, beta and gamma. The alpha chain contains the guanine nucleotide binding site.</text>
</comment>
<comment type="similarity">
    <text evidence="4">Belongs to the G-alpha family.</text>
</comment>
<evidence type="ECO:0000250" key="1"/>
<evidence type="ECO:0000255" key="2">
    <source>
        <dbReference type="PROSITE-ProRule" id="PRU01230"/>
    </source>
</evidence>
<evidence type="ECO:0000256" key="3">
    <source>
        <dbReference type="SAM" id="MobiDB-lite"/>
    </source>
</evidence>
<evidence type="ECO:0000305" key="4"/>
<dbReference type="EMBL" id="U85778">
    <property type="protein sequence ID" value="AAC49727.1"/>
    <property type="molecule type" value="Genomic_DNA"/>
</dbReference>
<dbReference type="EMBL" id="CM003158">
    <property type="protein sequence ID" value="KIS66392.1"/>
    <property type="molecule type" value="Genomic_DNA"/>
</dbReference>
<dbReference type="RefSeq" id="XP_011392079.1">
    <property type="nucleotide sequence ID" value="XM_011393777.1"/>
</dbReference>
<dbReference type="STRING" id="237631.P87035"/>
<dbReference type="EnsemblFungi" id="KIS66392">
    <property type="protein sequence ID" value="KIS66392"/>
    <property type="gene ID" value="UMAG_05385"/>
</dbReference>
<dbReference type="GeneID" id="23565294"/>
<dbReference type="KEGG" id="uma:UMAG_05385"/>
<dbReference type="VEuPathDB" id="FungiDB:UMAG_05385"/>
<dbReference type="eggNOG" id="KOG0082">
    <property type="taxonomic scope" value="Eukaryota"/>
</dbReference>
<dbReference type="HOGENOM" id="CLU_014184_1_1_1"/>
<dbReference type="InParanoid" id="P87035"/>
<dbReference type="OMA" id="WRTVIYF"/>
<dbReference type="OrthoDB" id="5817230at2759"/>
<dbReference type="PHI-base" id="PHI:79"/>
<dbReference type="Proteomes" id="UP000000561">
    <property type="component" value="Chromosome 19"/>
</dbReference>
<dbReference type="GO" id="GO:0005737">
    <property type="term" value="C:cytoplasm"/>
    <property type="evidence" value="ECO:0000318"/>
    <property type="project" value="GO_Central"/>
</dbReference>
<dbReference type="GO" id="GO:0005834">
    <property type="term" value="C:heterotrimeric G-protein complex"/>
    <property type="evidence" value="ECO:0000318"/>
    <property type="project" value="GO_Central"/>
</dbReference>
<dbReference type="GO" id="GO:0001664">
    <property type="term" value="F:G protein-coupled receptor binding"/>
    <property type="evidence" value="ECO:0000318"/>
    <property type="project" value="GO_Central"/>
</dbReference>
<dbReference type="GO" id="GO:0031683">
    <property type="term" value="F:G-protein beta/gamma-subunit complex binding"/>
    <property type="evidence" value="ECO:0000318"/>
    <property type="project" value="GO_Central"/>
</dbReference>
<dbReference type="GO" id="GO:0005525">
    <property type="term" value="F:GTP binding"/>
    <property type="evidence" value="ECO:0007669"/>
    <property type="project" value="UniProtKB-KW"/>
</dbReference>
<dbReference type="GO" id="GO:0003924">
    <property type="term" value="F:GTPase activity"/>
    <property type="evidence" value="ECO:0000318"/>
    <property type="project" value="GO_Central"/>
</dbReference>
<dbReference type="GO" id="GO:0046872">
    <property type="term" value="F:metal ion binding"/>
    <property type="evidence" value="ECO:0007669"/>
    <property type="project" value="UniProtKB-KW"/>
</dbReference>
<dbReference type="GO" id="GO:0007188">
    <property type="term" value="P:adenylate cyclase-modulating G protein-coupled receptor signaling pathway"/>
    <property type="evidence" value="ECO:0000318"/>
    <property type="project" value="GO_Central"/>
</dbReference>
<dbReference type="CDD" id="cd00066">
    <property type="entry name" value="G-alpha"/>
    <property type="match status" value="1"/>
</dbReference>
<dbReference type="FunFam" id="3.40.50.300:FF:005376">
    <property type="entry name" value="Guanine nucleotide-binding protein alpha-4 subunit"/>
    <property type="match status" value="1"/>
</dbReference>
<dbReference type="FunFam" id="3.40.50.300:FF:000692">
    <property type="entry name" value="Guanine nucleotide-binding protein subunit alpha"/>
    <property type="match status" value="1"/>
</dbReference>
<dbReference type="Gene3D" id="1.10.400.10">
    <property type="entry name" value="GI Alpha 1, domain 2-like"/>
    <property type="match status" value="1"/>
</dbReference>
<dbReference type="Gene3D" id="3.40.50.300">
    <property type="entry name" value="P-loop containing nucleotide triphosphate hydrolases"/>
    <property type="match status" value="2"/>
</dbReference>
<dbReference type="InterPro" id="IPR001019">
    <property type="entry name" value="Gprotein_alpha_su"/>
</dbReference>
<dbReference type="InterPro" id="IPR011025">
    <property type="entry name" value="GproteinA_insert"/>
</dbReference>
<dbReference type="InterPro" id="IPR027417">
    <property type="entry name" value="P-loop_NTPase"/>
</dbReference>
<dbReference type="PANTHER" id="PTHR10218">
    <property type="entry name" value="GTP-BINDING PROTEIN ALPHA SUBUNIT"/>
    <property type="match status" value="1"/>
</dbReference>
<dbReference type="PANTHER" id="PTHR10218:SF360">
    <property type="entry name" value="GUANINE NUCLEOTIDE-BINDING PROTEIN SUBUNIT ALPHA HOMOLOG"/>
    <property type="match status" value="1"/>
</dbReference>
<dbReference type="Pfam" id="PF00503">
    <property type="entry name" value="G-alpha"/>
    <property type="match status" value="1"/>
</dbReference>
<dbReference type="PRINTS" id="PR00318">
    <property type="entry name" value="GPROTEINA"/>
</dbReference>
<dbReference type="SMART" id="SM00275">
    <property type="entry name" value="G_alpha"/>
    <property type="match status" value="1"/>
</dbReference>
<dbReference type="SUPFAM" id="SSF52540">
    <property type="entry name" value="P-loop containing nucleoside triphosphate hydrolases"/>
    <property type="match status" value="1"/>
</dbReference>
<dbReference type="SUPFAM" id="SSF47895">
    <property type="entry name" value="Transducin (alpha subunit), insertion domain"/>
    <property type="match status" value="1"/>
</dbReference>
<dbReference type="PROSITE" id="PS51882">
    <property type="entry name" value="G_ALPHA"/>
    <property type="match status" value="1"/>
</dbReference>
<accession>P87035</accession>
<accession>A0A0D1BWN0</accession>
<accession>Q4P3C8</accession>
<protein>
    <recommendedName>
        <fullName>Guanine nucleotide-binding protein alpha-4 subunit</fullName>
    </recommendedName>
</protein>
<gene>
    <name type="primary">GPA4</name>
    <name type="ORF">UMAG_05385</name>
</gene>
<name>GPA4_MYCMD</name>
<feature type="chain" id="PRO_0000203615" description="Guanine nucleotide-binding protein alpha-4 subunit">
    <location>
        <begin position="1"/>
        <end position="580"/>
    </location>
</feature>
<feature type="domain" description="G-alpha" evidence="2">
    <location>
        <begin position="93"/>
        <end position="579"/>
    </location>
</feature>
<feature type="region of interest" description="Disordered" evidence="3">
    <location>
        <begin position="1"/>
        <end position="28"/>
    </location>
</feature>
<feature type="region of interest" description="G1 motif" evidence="2">
    <location>
        <begin position="96"/>
        <end position="109"/>
    </location>
</feature>
<feature type="region of interest" description="Disordered" evidence="3">
    <location>
        <begin position="160"/>
        <end position="196"/>
    </location>
</feature>
<feature type="region of interest" description="Disordered" evidence="3">
    <location>
        <begin position="302"/>
        <end position="325"/>
    </location>
</feature>
<feature type="region of interest" description="G2 motif" evidence="2">
    <location>
        <begin position="387"/>
        <end position="395"/>
    </location>
</feature>
<feature type="region of interest" description="G3 motif" evidence="2">
    <location>
        <begin position="411"/>
        <end position="420"/>
    </location>
</feature>
<feature type="region of interest" description="G4 motif" evidence="2">
    <location>
        <begin position="480"/>
        <end position="487"/>
    </location>
</feature>
<feature type="region of interest" description="G5 motif" evidence="2">
    <location>
        <begin position="549"/>
        <end position="554"/>
    </location>
</feature>
<feature type="compositionally biased region" description="Polar residues" evidence="3">
    <location>
        <begin position="1"/>
        <end position="10"/>
    </location>
</feature>
<feature type="compositionally biased region" description="Low complexity" evidence="3">
    <location>
        <begin position="167"/>
        <end position="183"/>
    </location>
</feature>
<feature type="binding site" evidence="1">
    <location>
        <begin position="101"/>
        <end position="108"/>
    </location>
    <ligand>
        <name>GTP</name>
        <dbReference type="ChEBI" id="CHEBI:37565"/>
    </ligand>
</feature>
<feature type="binding site" evidence="1">
    <location>
        <begin position="389"/>
        <end position="395"/>
    </location>
    <ligand>
        <name>GTP</name>
        <dbReference type="ChEBI" id="CHEBI:37565"/>
    </ligand>
</feature>
<feature type="binding site" evidence="1">
    <location>
        <position position="395"/>
    </location>
    <ligand>
        <name>Mg(2+)</name>
        <dbReference type="ChEBI" id="CHEBI:18420"/>
    </ligand>
</feature>
<feature type="binding site" evidence="1">
    <location>
        <begin position="415"/>
        <end position="419"/>
    </location>
    <ligand>
        <name>GTP</name>
        <dbReference type="ChEBI" id="CHEBI:37565"/>
    </ligand>
</feature>
<feature type="binding site" evidence="1">
    <location>
        <begin position="484"/>
        <end position="487"/>
    </location>
    <ligand>
        <name>GTP</name>
        <dbReference type="ChEBI" id="CHEBI:37565"/>
    </ligand>
</feature>
<feature type="binding site" evidence="1">
    <location>
        <position position="551"/>
    </location>
    <ligand>
        <name>GTP</name>
        <dbReference type="ChEBI" id="CHEBI:37565"/>
    </ligand>
</feature>